<comment type="similarity">
    <text evidence="1">Belongs to the SlyX family.</text>
</comment>
<name>SLYX_SALDC</name>
<evidence type="ECO:0000255" key="1">
    <source>
        <dbReference type="HAMAP-Rule" id="MF_00715"/>
    </source>
</evidence>
<evidence type="ECO:0000256" key="2">
    <source>
        <dbReference type="SAM" id="MobiDB-lite"/>
    </source>
</evidence>
<protein>
    <recommendedName>
        <fullName evidence="1">Protein SlyX</fullName>
    </recommendedName>
</protein>
<accession>B5FJM8</accession>
<proteinExistence type="inferred from homology"/>
<reference key="1">
    <citation type="journal article" date="2011" name="J. Bacteriol.">
        <title>Comparative genomics of 28 Salmonella enterica isolates: evidence for CRISPR-mediated adaptive sublineage evolution.</title>
        <authorList>
            <person name="Fricke W.F."/>
            <person name="Mammel M.K."/>
            <person name="McDermott P.F."/>
            <person name="Tartera C."/>
            <person name="White D.G."/>
            <person name="Leclerc J.E."/>
            <person name="Ravel J."/>
            <person name="Cebula T.A."/>
        </authorList>
    </citation>
    <scope>NUCLEOTIDE SEQUENCE [LARGE SCALE GENOMIC DNA]</scope>
    <source>
        <strain>CT_02021853</strain>
    </source>
</reference>
<sequence>MQDITMEARLAELESRLAFQEITIEELNLTVTAHEMEMAKLRDHLRLLTEKLKASQPSNIASQAEETPPPHY</sequence>
<feature type="chain" id="PRO_1000195850" description="Protein SlyX">
    <location>
        <begin position="1"/>
        <end position="72"/>
    </location>
</feature>
<feature type="region of interest" description="Disordered" evidence="2">
    <location>
        <begin position="53"/>
        <end position="72"/>
    </location>
</feature>
<feature type="compositionally biased region" description="Polar residues" evidence="2">
    <location>
        <begin position="55"/>
        <end position="65"/>
    </location>
</feature>
<dbReference type="EMBL" id="CP001144">
    <property type="protein sequence ID" value="ACH76763.1"/>
    <property type="molecule type" value="Genomic_DNA"/>
</dbReference>
<dbReference type="RefSeq" id="WP_001152701.1">
    <property type="nucleotide sequence ID" value="NC_011205.1"/>
</dbReference>
<dbReference type="SMR" id="B5FJM8"/>
<dbReference type="KEGG" id="sed:SeD_A3822"/>
<dbReference type="HOGENOM" id="CLU_180796_4_2_6"/>
<dbReference type="Proteomes" id="UP000008322">
    <property type="component" value="Chromosome"/>
</dbReference>
<dbReference type="Gene3D" id="1.20.5.300">
    <property type="match status" value="1"/>
</dbReference>
<dbReference type="HAMAP" id="MF_00715">
    <property type="entry name" value="SlyX"/>
    <property type="match status" value="1"/>
</dbReference>
<dbReference type="InterPro" id="IPR007236">
    <property type="entry name" value="SlyX"/>
</dbReference>
<dbReference type="NCBIfam" id="NF002750">
    <property type="entry name" value="PRK02793.1"/>
    <property type="match status" value="1"/>
</dbReference>
<dbReference type="PANTHER" id="PTHR36508">
    <property type="entry name" value="PROTEIN SLYX"/>
    <property type="match status" value="1"/>
</dbReference>
<dbReference type="PANTHER" id="PTHR36508:SF1">
    <property type="entry name" value="PROTEIN SLYX"/>
    <property type="match status" value="1"/>
</dbReference>
<dbReference type="Pfam" id="PF04102">
    <property type="entry name" value="SlyX"/>
    <property type="match status" value="1"/>
</dbReference>
<organism>
    <name type="scientific">Salmonella dublin (strain CT_02021853)</name>
    <dbReference type="NCBI Taxonomy" id="439851"/>
    <lineage>
        <taxon>Bacteria</taxon>
        <taxon>Pseudomonadati</taxon>
        <taxon>Pseudomonadota</taxon>
        <taxon>Gammaproteobacteria</taxon>
        <taxon>Enterobacterales</taxon>
        <taxon>Enterobacteriaceae</taxon>
        <taxon>Salmonella</taxon>
    </lineage>
</organism>
<gene>
    <name evidence="1" type="primary">slyX</name>
    <name type="ordered locus">SeD_A3822</name>
</gene>